<accession>A3QGZ6</accession>
<protein>
    <recommendedName>
        <fullName evidence="1">Na(+)-translocating NADH-quinone reductase subunit D</fullName>
        <shortName evidence="1">Na(+)-NQR subunit D</shortName>
        <shortName evidence="1">Na(+)-translocating NQR subunit D</shortName>
        <ecNumber evidence="1">7.2.1.1</ecNumber>
    </recommendedName>
    <alternativeName>
        <fullName evidence="1">NQR complex subunit D</fullName>
    </alternativeName>
    <alternativeName>
        <fullName evidence="1">NQR-1 subunit D</fullName>
    </alternativeName>
</protein>
<evidence type="ECO:0000255" key="1">
    <source>
        <dbReference type="HAMAP-Rule" id="MF_00428"/>
    </source>
</evidence>
<reference key="1">
    <citation type="submission" date="2007-03" db="EMBL/GenBank/DDBJ databases">
        <title>Complete sequence of Shewanella loihica PV-4.</title>
        <authorList>
            <consortium name="US DOE Joint Genome Institute"/>
            <person name="Copeland A."/>
            <person name="Lucas S."/>
            <person name="Lapidus A."/>
            <person name="Barry K."/>
            <person name="Detter J.C."/>
            <person name="Glavina del Rio T."/>
            <person name="Hammon N."/>
            <person name="Israni S."/>
            <person name="Dalin E."/>
            <person name="Tice H."/>
            <person name="Pitluck S."/>
            <person name="Chain P."/>
            <person name="Malfatti S."/>
            <person name="Shin M."/>
            <person name="Vergez L."/>
            <person name="Schmutz J."/>
            <person name="Larimer F."/>
            <person name="Land M."/>
            <person name="Hauser L."/>
            <person name="Kyrpides N."/>
            <person name="Mikhailova N."/>
            <person name="Romine M.F."/>
            <person name="Serres G."/>
            <person name="Fredrickson J."/>
            <person name="Tiedje J."/>
            <person name="Richardson P."/>
        </authorList>
    </citation>
    <scope>NUCLEOTIDE SEQUENCE [LARGE SCALE GENOMIC DNA]</scope>
    <source>
        <strain>ATCC BAA-1088 / PV-4</strain>
    </source>
</reference>
<dbReference type="EC" id="7.2.1.1" evidence="1"/>
<dbReference type="EMBL" id="CP000606">
    <property type="protein sequence ID" value="ABO24744.1"/>
    <property type="molecule type" value="Genomic_DNA"/>
</dbReference>
<dbReference type="RefSeq" id="WP_011866675.1">
    <property type="nucleotide sequence ID" value="NC_009092.1"/>
</dbReference>
<dbReference type="SMR" id="A3QGZ6"/>
<dbReference type="STRING" id="323850.Shew_2878"/>
<dbReference type="KEGG" id="slo:Shew_2878"/>
<dbReference type="eggNOG" id="COG1347">
    <property type="taxonomic scope" value="Bacteria"/>
</dbReference>
<dbReference type="HOGENOM" id="CLU_046659_1_1_6"/>
<dbReference type="OrthoDB" id="9782945at2"/>
<dbReference type="Proteomes" id="UP000001558">
    <property type="component" value="Chromosome"/>
</dbReference>
<dbReference type="GO" id="GO:0005886">
    <property type="term" value="C:plasma membrane"/>
    <property type="evidence" value="ECO:0007669"/>
    <property type="project" value="UniProtKB-SubCell"/>
</dbReference>
<dbReference type="GO" id="GO:0016655">
    <property type="term" value="F:oxidoreductase activity, acting on NAD(P)H, quinone or similar compound as acceptor"/>
    <property type="evidence" value="ECO:0007669"/>
    <property type="project" value="UniProtKB-UniRule"/>
</dbReference>
<dbReference type="GO" id="GO:0006814">
    <property type="term" value="P:sodium ion transport"/>
    <property type="evidence" value="ECO:0007669"/>
    <property type="project" value="UniProtKB-UniRule"/>
</dbReference>
<dbReference type="HAMAP" id="MF_00428">
    <property type="entry name" value="NqrD"/>
    <property type="match status" value="1"/>
</dbReference>
<dbReference type="InterPro" id="IPR011292">
    <property type="entry name" value="NqrD"/>
</dbReference>
<dbReference type="InterPro" id="IPR003667">
    <property type="entry name" value="NqrDE/RnfAE"/>
</dbReference>
<dbReference type="NCBIfam" id="TIGR01939">
    <property type="entry name" value="nqrD"/>
    <property type="match status" value="1"/>
</dbReference>
<dbReference type="NCBIfam" id="NF006777">
    <property type="entry name" value="PRK09292.1"/>
    <property type="match status" value="1"/>
</dbReference>
<dbReference type="NCBIfam" id="NF009070">
    <property type="entry name" value="PRK12405.1"/>
    <property type="match status" value="1"/>
</dbReference>
<dbReference type="PANTHER" id="PTHR30586">
    <property type="entry name" value="ELECTRON TRANSPORT COMPLEX PROTEIN RNFE"/>
    <property type="match status" value="1"/>
</dbReference>
<dbReference type="PANTHER" id="PTHR30586:SF1">
    <property type="entry name" value="NA(+)-TRANSLOCATING NADH-QUINONE REDUCTASE SUBUNIT D"/>
    <property type="match status" value="1"/>
</dbReference>
<dbReference type="Pfam" id="PF02508">
    <property type="entry name" value="Rnf-Nqr"/>
    <property type="match status" value="1"/>
</dbReference>
<dbReference type="PIRSF" id="PIRSF006102">
    <property type="entry name" value="NQR_DE"/>
    <property type="match status" value="1"/>
</dbReference>
<name>NQRD_SHELP</name>
<gene>
    <name evidence="1" type="primary">nqrD</name>
    <name type="ordered locus">Shew_2878</name>
</gene>
<sequence length="210" mass="22488">MADAKELKQVLTGPIISNNPIALQILGVCSALAVTSKMETALVMTIALTAVTALSNLFISMIRNHIPSSVRIIVQMTIIASLVIVVDQVLQAYAYDVAKQLSVFVGLIITNCIVMGRAEAYAMKTPPMMSFMDGIGNGLGYGAILLSVGFVRELFGNGSLFGVEILSKISEGGWYQPNGLLLLPPSAFFLIASLIWIIRTIKPEQVEAKG</sequence>
<feature type="chain" id="PRO_1000060169" description="Na(+)-translocating NADH-quinone reductase subunit D">
    <location>
        <begin position="1"/>
        <end position="210"/>
    </location>
</feature>
<feature type="transmembrane region" description="Helical" evidence="1">
    <location>
        <begin position="14"/>
        <end position="34"/>
    </location>
</feature>
<feature type="transmembrane region" description="Helical" evidence="1">
    <location>
        <begin position="42"/>
        <end position="62"/>
    </location>
</feature>
<feature type="transmembrane region" description="Helical" evidence="1">
    <location>
        <begin position="72"/>
        <end position="92"/>
    </location>
</feature>
<feature type="transmembrane region" description="Helical" evidence="1">
    <location>
        <begin position="103"/>
        <end position="123"/>
    </location>
</feature>
<feature type="transmembrane region" description="Helical" evidence="1">
    <location>
        <begin position="131"/>
        <end position="151"/>
    </location>
</feature>
<feature type="transmembrane region" description="Helical" evidence="1">
    <location>
        <begin position="178"/>
        <end position="198"/>
    </location>
</feature>
<keyword id="KW-0997">Cell inner membrane</keyword>
<keyword id="KW-1003">Cell membrane</keyword>
<keyword id="KW-0406">Ion transport</keyword>
<keyword id="KW-0472">Membrane</keyword>
<keyword id="KW-0520">NAD</keyword>
<keyword id="KW-1185">Reference proteome</keyword>
<keyword id="KW-0915">Sodium</keyword>
<keyword id="KW-0739">Sodium transport</keyword>
<keyword id="KW-1278">Translocase</keyword>
<keyword id="KW-0812">Transmembrane</keyword>
<keyword id="KW-1133">Transmembrane helix</keyword>
<keyword id="KW-0813">Transport</keyword>
<keyword id="KW-0830">Ubiquinone</keyword>
<proteinExistence type="inferred from homology"/>
<comment type="function">
    <text evidence="1">NQR complex catalyzes the reduction of ubiquinone-1 to ubiquinol by two successive reactions, coupled with the transport of Na(+) ions from the cytoplasm to the periplasm. NqrA to NqrE are probably involved in the second step, the conversion of ubisemiquinone to ubiquinol.</text>
</comment>
<comment type="catalytic activity">
    <reaction evidence="1">
        <text>a ubiquinone + n Na(+)(in) + NADH + H(+) = a ubiquinol + n Na(+)(out) + NAD(+)</text>
        <dbReference type="Rhea" id="RHEA:47748"/>
        <dbReference type="Rhea" id="RHEA-COMP:9565"/>
        <dbReference type="Rhea" id="RHEA-COMP:9566"/>
        <dbReference type="ChEBI" id="CHEBI:15378"/>
        <dbReference type="ChEBI" id="CHEBI:16389"/>
        <dbReference type="ChEBI" id="CHEBI:17976"/>
        <dbReference type="ChEBI" id="CHEBI:29101"/>
        <dbReference type="ChEBI" id="CHEBI:57540"/>
        <dbReference type="ChEBI" id="CHEBI:57945"/>
        <dbReference type="EC" id="7.2.1.1"/>
    </reaction>
</comment>
<comment type="subunit">
    <text evidence="1">Composed of six subunits; NqrA, NqrB, NqrC, NqrD, NqrE and NqrF.</text>
</comment>
<comment type="subcellular location">
    <subcellularLocation>
        <location evidence="1">Cell inner membrane</location>
        <topology evidence="1">Multi-pass membrane protein</topology>
    </subcellularLocation>
</comment>
<comment type="similarity">
    <text evidence="1">Belongs to the NqrDE/RnfAE family.</text>
</comment>
<organism>
    <name type="scientific">Shewanella loihica (strain ATCC BAA-1088 / PV-4)</name>
    <dbReference type="NCBI Taxonomy" id="323850"/>
    <lineage>
        <taxon>Bacteria</taxon>
        <taxon>Pseudomonadati</taxon>
        <taxon>Pseudomonadota</taxon>
        <taxon>Gammaproteobacteria</taxon>
        <taxon>Alteromonadales</taxon>
        <taxon>Shewanellaceae</taxon>
        <taxon>Shewanella</taxon>
    </lineage>
</organism>